<proteinExistence type="inferred from homology"/>
<keyword id="KW-0131">Cell cycle</keyword>
<keyword id="KW-0132">Cell division</keyword>
<keyword id="KW-0133">Cell shape</keyword>
<keyword id="KW-0961">Cell wall biogenesis/degradation</keyword>
<keyword id="KW-0963">Cytoplasm</keyword>
<keyword id="KW-0573">Peptidoglycan synthesis</keyword>
<keyword id="KW-0670">Pyruvate</keyword>
<keyword id="KW-0808">Transferase</keyword>
<feature type="chain" id="PRO_1000094699" description="UDP-N-acetylglucosamine 1-carboxyvinyltransferase">
    <location>
        <begin position="1"/>
        <end position="429"/>
    </location>
</feature>
<feature type="active site" description="Proton donor" evidence="1">
    <location>
        <position position="126"/>
    </location>
</feature>
<feature type="binding site" evidence="1">
    <location>
        <begin position="22"/>
        <end position="23"/>
    </location>
    <ligand>
        <name>phosphoenolpyruvate</name>
        <dbReference type="ChEBI" id="CHEBI:58702"/>
    </ligand>
</feature>
<feature type="binding site" evidence="1">
    <location>
        <position position="102"/>
    </location>
    <ligand>
        <name>UDP-N-acetyl-alpha-D-glucosamine</name>
        <dbReference type="ChEBI" id="CHEBI:57705"/>
    </ligand>
</feature>
<feature type="binding site" evidence="1">
    <location>
        <position position="316"/>
    </location>
    <ligand>
        <name>UDP-N-acetyl-alpha-D-glucosamine</name>
        <dbReference type="ChEBI" id="CHEBI:57705"/>
    </ligand>
</feature>
<feature type="binding site" evidence="1">
    <location>
        <position position="338"/>
    </location>
    <ligand>
        <name>UDP-N-acetyl-alpha-D-glucosamine</name>
        <dbReference type="ChEBI" id="CHEBI:57705"/>
    </ligand>
</feature>
<feature type="modified residue" description="2-(S-cysteinyl)pyruvic acid O-phosphothioketal" evidence="1">
    <location>
        <position position="126"/>
    </location>
</feature>
<name>MURA_METEP</name>
<comment type="function">
    <text evidence="1">Cell wall formation. Adds enolpyruvyl to UDP-N-acetylglucosamine.</text>
</comment>
<comment type="catalytic activity">
    <reaction evidence="1">
        <text>phosphoenolpyruvate + UDP-N-acetyl-alpha-D-glucosamine = UDP-N-acetyl-3-O-(1-carboxyvinyl)-alpha-D-glucosamine + phosphate</text>
        <dbReference type="Rhea" id="RHEA:18681"/>
        <dbReference type="ChEBI" id="CHEBI:43474"/>
        <dbReference type="ChEBI" id="CHEBI:57705"/>
        <dbReference type="ChEBI" id="CHEBI:58702"/>
        <dbReference type="ChEBI" id="CHEBI:68483"/>
        <dbReference type="EC" id="2.5.1.7"/>
    </reaction>
</comment>
<comment type="pathway">
    <text evidence="1">Cell wall biogenesis; peptidoglycan biosynthesis.</text>
</comment>
<comment type="subcellular location">
    <subcellularLocation>
        <location evidence="1">Cytoplasm</location>
    </subcellularLocation>
</comment>
<comment type="similarity">
    <text evidence="1">Belongs to the EPSP synthase family. MurA subfamily.</text>
</comment>
<sequence length="429" mass="45150">MDRIHITGGTPLNGTIPISGAKNAALPLMIASLLTGETLELINVPRLADIAALTRILGNHGVDHMVVGKRPGQTAETGQTVRLTASNVIDTTAPYELVSTMRASFWVIAPLLARFGEAKVSLPGGCAIGTRPVNLLIMALEKLGAEIEIDGGYVVAKTKNGLRGAEIVFPSVTVGGTHVALMAAALAYGTTVIDNAAREPEVVDLAECLIKMGARIEGAGTSRIVVEGVARLGGTRHEVLPDRIETGTYAMAVAMTGGDVSLVNTRTDLLASALETLASTGTEVTALPDGIRVRRNGGGISPADVTTDPFPGFPTDLQAQFMALMTLAKGQSRIRETIFENRFMHVQELARLGARIRLDGDLAVVEGVERLKGAPVMATDLRASVSLVIGALAAEGETQINRVYHLDRGFEALEAKLARCGAQIERVRA</sequence>
<gene>
    <name evidence="1" type="primary">murA</name>
    <name type="ordered locus">Mext_1987</name>
</gene>
<evidence type="ECO:0000255" key="1">
    <source>
        <dbReference type="HAMAP-Rule" id="MF_00111"/>
    </source>
</evidence>
<accession>A9W480</accession>
<reference key="1">
    <citation type="submission" date="2007-12" db="EMBL/GenBank/DDBJ databases">
        <title>Complete sequence of Methylobacterium extorquens PA1.</title>
        <authorList>
            <consortium name="US DOE Joint Genome Institute"/>
            <person name="Copeland A."/>
            <person name="Lucas S."/>
            <person name="Lapidus A."/>
            <person name="Barry K."/>
            <person name="Glavina del Rio T."/>
            <person name="Dalin E."/>
            <person name="Tice H."/>
            <person name="Pitluck S."/>
            <person name="Saunders E."/>
            <person name="Brettin T."/>
            <person name="Bruce D."/>
            <person name="Detter J.C."/>
            <person name="Han C."/>
            <person name="Schmutz J."/>
            <person name="Larimer F."/>
            <person name="Land M."/>
            <person name="Hauser L."/>
            <person name="Kyrpides N."/>
            <person name="Kim E."/>
            <person name="Marx C."/>
            <person name="Richardson P."/>
        </authorList>
    </citation>
    <scope>NUCLEOTIDE SEQUENCE [LARGE SCALE GENOMIC DNA]</scope>
    <source>
        <strain>PA1</strain>
    </source>
</reference>
<dbReference type="EC" id="2.5.1.7" evidence="1"/>
<dbReference type="EMBL" id="CP000908">
    <property type="protein sequence ID" value="ABY30386.1"/>
    <property type="molecule type" value="Genomic_DNA"/>
</dbReference>
<dbReference type="RefSeq" id="WP_012253521.1">
    <property type="nucleotide sequence ID" value="NC_010172.1"/>
</dbReference>
<dbReference type="SMR" id="A9W480"/>
<dbReference type="GeneID" id="72989678"/>
<dbReference type="KEGG" id="mex:Mext_1987"/>
<dbReference type="eggNOG" id="COG0766">
    <property type="taxonomic scope" value="Bacteria"/>
</dbReference>
<dbReference type="HOGENOM" id="CLU_027387_0_0_5"/>
<dbReference type="BioCyc" id="MEXT419610:MEXT_RS10055-MONOMER"/>
<dbReference type="UniPathway" id="UPA00219"/>
<dbReference type="GO" id="GO:0005737">
    <property type="term" value="C:cytoplasm"/>
    <property type="evidence" value="ECO:0007669"/>
    <property type="project" value="UniProtKB-SubCell"/>
</dbReference>
<dbReference type="GO" id="GO:0008760">
    <property type="term" value="F:UDP-N-acetylglucosamine 1-carboxyvinyltransferase activity"/>
    <property type="evidence" value="ECO:0007669"/>
    <property type="project" value="UniProtKB-UniRule"/>
</dbReference>
<dbReference type="GO" id="GO:0051301">
    <property type="term" value="P:cell division"/>
    <property type="evidence" value="ECO:0007669"/>
    <property type="project" value="UniProtKB-KW"/>
</dbReference>
<dbReference type="GO" id="GO:0071555">
    <property type="term" value="P:cell wall organization"/>
    <property type="evidence" value="ECO:0007669"/>
    <property type="project" value="UniProtKB-KW"/>
</dbReference>
<dbReference type="GO" id="GO:0009252">
    <property type="term" value="P:peptidoglycan biosynthetic process"/>
    <property type="evidence" value="ECO:0007669"/>
    <property type="project" value="UniProtKB-UniRule"/>
</dbReference>
<dbReference type="GO" id="GO:0008360">
    <property type="term" value="P:regulation of cell shape"/>
    <property type="evidence" value="ECO:0007669"/>
    <property type="project" value="UniProtKB-KW"/>
</dbReference>
<dbReference type="GO" id="GO:0019277">
    <property type="term" value="P:UDP-N-acetylgalactosamine biosynthetic process"/>
    <property type="evidence" value="ECO:0007669"/>
    <property type="project" value="InterPro"/>
</dbReference>
<dbReference type="CDD" id="cd01555">
    <property type="entry name" value="UdpNAET"/>
    <property type="match status" value="1"/>
</dbReference>
<dbReference type="FunFam" id="3.65.10.10:FF:000001">
    <property type="entry name" value="UDP-N-acetylglucosamine 1-carboxyvinyltransferase"/>
    <property type="match status" value="1"/>
</dbReference>
<dbReference type="Gene3D" id="3.65.10.10">
    <property type="entry name" value="Enolpyruvate transferase domain"/>
    <property type="match status" value="2"/>
</dbReference>
<dbReference type="HAMAP" id="MF_00111">
    <property type="entry name" value="MurA"/>
    <property type="match status" value="1"/>
</dbReference>
<dbReference type="InterPro" id="IPR001986">
    <property type="entry name" value="Enolpyruvate_Tfrase_dom"/>
</dbReference>
<dbReference type="InterPro" id="IPR036968">
    <property type="entry name" value="Enolpyruvate_Tfrase_sf"/>
</dbReference>
<dbReference type="InterPro" id="IPR050068">
    <property type="entry name" value="MurA_subfamily"/>
</dbReference>
<dbReference type="InterPro" id="IPR013792">
    <property type="entry name" value="RNA3'P_cycl/enolpyr_Trfase_a/b"/>
</dbReference>
<dbReference type="InterPro" id="IPR005750">
    <property type="entry name" value="UDP_GlcNAc_COvinyl_MurA"/>
</dbReference>
<dbReference type="NCBIfam" id="TIGR01072">
    <property type="entry name" value="murA"/>
    <property type="match status" value="1"/>
</dbReference>
<dbReference type="NCBIfam" id="NF006873">
    <property type="entry name" value="PRK09369.1"/>
    <property type="match status" value="1"/>
</dbReference>
<dbReference type="PANTHER" id="PTHR43783">
    <property type="entry name" value="UDP-N-ACETYLGLUCOSAMINE 1-CARBOXYVINYLTRANSFERASE"/>
    <property type="match status" value="1"/>
</dbReference>
<dbReference type="PANTHER" id="PTHR43783:SF1">
    <property type="entry name" value="UDP-N-ACETYLGLUCOSAMINE 1-CARBOXYVINYLTRANSFERASE"/>
    <property type="match status" value="1"/>
</dbReference>
<dbReference type="Pfam" id="PF00275">
    <property type="entry name" value="EPSP_synthase"/>
    <property type="match status" value="1"/>
</dbReference>
<dbReference type="SUPFAM" id="SSF55205">
    <property type="entry name" value="EPT/RTPC-like"/>
    <property type="match status" value="1"/>
</dbReference>
<protein>
    <recommendedName>
        <fullName evidence="1">UDP-N-acetylglucosamine 1-carboxyvinyltransferase</fullName>
        <ecNumber evidence="1">2.5.1.7</ecNumber>
    </recommendedName>
    <alternativeName>
        <fullName evidence="1">Enoylpyruvate transferase</fullName>
    </alternativeName>
    <alternativeName>
        <fullName evidence="1">UDP-N-acetylglucosamine enolpyruvyl transferase</fullName>
        <shortName evidence="1">EPT</shortName>
    </alternativeName>
</protein>
<organism>
    <name type="scientific">Methylorubrum extorquens (strain PA1)</name>
    <name type="common">Methylobacterium extorquens</name>
    <dbReference type="NCBI Taxonomy" id="419610"/>
    <lineage>
        <taxon>Bacteria</taxon>
        <taxon>Pseudomonadati</taxon>
        <taxon>Pseudomonadota</taxon>
        <taxon>Alphaproteobacteria</taxon>
        <taxon>Hyphomicrobiales</taxon>
        <taxon>Methylobacteriaceae</taxon>
        <taxon>Methylorubrum</taxon>
    </lineage>
</organism>